<feature type="chain" id="PRO_0000171354" description="tRNA (guanine-N(7)-)-methyltransferase">
    <location>
        <begin position="1"/>
        <end position="230"/>
    </location>
</feature>
<feature type="active site" evidence="1">
    <location>
        <position position="136"/>
    </location>
</feature>
<feature type="binding site" evidence="2">
    <location>
        <position position="61"/>
    </location>
    <ligand>
        <name>S-adenosyl-L-methionine</name>
        <dbReference type="ChEBI" id="CHEBI:59789"/>
    </ligand>
</feature>
<feature type="binding site" evidence="2">
    <location>
        <position position="86"/>
    </location>
    <ligand>
        <name>S-adenosyl-L-methionine</name>
        <dbReference type="ChEBI" id="CHEBI:59789"/>
    </ligand>
</feature>
<feature type="binding site" evidence="2">
    <location>
        <position position="113"/>
    </location>
    <ligand>
        <name>S-adenosyl-L-methionine</name>
        <dbReference type="ChEBI" id="CHEBI:59789"/>
    </ligand>
</feature>
<feature type="binding site" evidence="2">
    <location>
        <position position="136"/>
    </location>
    <ligand>
        <name>S-adenosyl-L-methionine</name>
        <dbReference type="ChEBI" id="CHEBI:59789"/>
    </ligand>
</feature>
<feature type="binding site" evidence="2">
    <location>
        <position position="140"/>
    </location>
    <ligand>
        <name>substrate</name>
    </ligand>
</feature>
<feature type="binding site" evidence="2">
    <location>
        <position position="172"/>
    </location>
    <ligand>
        <name>substrate</name>
    </ligand>
</feature>
<feature type="binding site" evidence="2">
    <location>
        <begin position="208"/>
        <end position="211"/>
    </location>
    <ligand>
        <name>substrate</name>
    </ligand>
</feature>
<reference key="1">
    <citation type="journal article" date="2001" name="Nature">
        <title>Massive gene decay in the leprosy bacillus.</title>
        <authorList>
            <person name="Cole S.T."/>
            <person name="Eiglmeier K."/>
            <person name="Parkhill J."/>
            <person name="James K.D."/>
            <person name="Thomson N.R."/>
            <person name="Wheeler P.R."/>
            <person name="Honore N."/>
            <person name="Garnier T."/>
            <person name="Churcher C.M."/>
            <person name="Harris D.E."/>
            <person name="Mungall K.L."/>
            <person name="Basham D."/>
            <person name="Brown D."/>
            <person name="Chillingworth T."/>
            <person name="Connor R."/>
            <person name="Davies R.M."/>
            <person name="Devlin K."/>
            <person name="Duthoy S."/>
            <person name="Feltwell T."/>
            <person name="Fraser A."/>
            <person name="Hamlin N."/>
            <person name="Holroyd S."/>
            <person name="Hornsby T."/>
            <person name="Jagels K."/>
            <person name="Lacroix C."/>
            <person name="Maclean J."/>
            <person name="Moule S."/>
            <person name="Murphy L.D."/>
            <person name="Oliver K."/>
            <person name="Quail M.A."/>
            <person name="Rajandream M.A."/>
            <person name="Rutherford K.M."/>
            <person name="Rutter S."/>
            <person name="Seeger K."/>
            <person name="Simon S."/>
            <person name="Simmonds M."/>
            <person name="Skelton J."/>
            <person name="Squares R."/>
            <person name="Squares S."/>
            <person name="Stevens K."/>
            <person name="Taylor K."/>
            <person name="Whitehead S."/>
            <person name="Woodward J.R."/>
            <person name="Barrell B.G."/>
        </authorList>
    </citation>
    <scope>NUCLEOTIDE SEQUENCE [LARGE SCALE GENOMIC DNA]</scope>
    <source>
        <strain>TN</strain>
    </source>
</reference>
<sequence length="230" mass="25821">MARHLPATAFRKRRSALSHAQRQTWERLWPEIGISAVSQTRSAERLDTGAWFGRSTLVVLEVGCGSGTATLAMAQHEPDIDVIAVEVYRRGLAQLLCAIDRDQVHNIRMIHGNALYVLQYLIAPRSLTGVRVFFPDPWPKVRHHKRRFLQPATVELIADRLLPGGVLHTATDHPDYAKQIAKFGDGEPLLSRADGRTQLPISTVRPTTKYETKAQHAGNVVTELIWKKRS</sequence>
<dbReference type="EC" id="2.1.1.33" evidence="2"/>
<dbReference type="EMBL" id="Z95398">
    <property type="protein sequence ID" value="CAB08804.1"/>
    <property type="status" value="ALT_INIT"/>
    <property type="molecule type" value="Genomic_DNA"/>
</dbReference>
<dbReference type="EMBL" id="AL583926">
    <property type="protein sequence ID" value="CAC32154.1"/>
    <property type="molecule type" value="Genomic_DNA"/>
</dbReference>
<dbReference type="PIR" id="D87237">
    <property type="entry name" value="D87237"/>
</dbReference>
<dbReference type="RefSeq" id="NP_302680.1">
    <property type="nucleotide sequence ID" value="NC_002677.1"/>
</dbReference>
<dbReference type="RefSeq" id="WP_010908999.1">
    <property type="nucleotide sequence ID" value="NC_002677.1"/>
</dbReference>
<dbReference type="SMR" id="Q9CCZ9"/>
<dbReference type="STRING" id="272631.gene:17576488"/>
<dbReference type="KEGG" id="mle:ML2622"/>
<dbReference type="PATRIC" id="fig|272631.5.peg.5023"/>
<dbReference type="Leproma" id="ML2622"/>
<dbReference type="eggNOG" id="COG0220">
    <property type="taxonomic scope" value="Bacteria"/>
</dbReference>
<dbReference type="HOGENOM" id="CLU_050910_0_2_11"/>
<dbReference type="OrthoDB" id="9802090at2"/>
<dbReference type="UniPathway" id="UPA00989"/>
<dbReference type="Proteomes" id="UP000000806">
    <property type="component" value="Chromosome"/>
</dbReference>
<dbReference type="GO" id="GO:0043527">
    <property type="term" value="C:tRNA methyltransferase complex"/>
    <property type="evidence" value="ECO:0007669"/>
    <property type="project" value="TreeGrafter"/>
</dbReference>
<dbReference type="GO" id="GO:0008176">
    <property type="term" value="F:tRNA (guanine(46)-N7)-methyltransferase activity"/>
    <property type="evidence" value="ECO:0007669"/>
    <property type="project" value="UniProtKB-UniRule"/>
</dbReference>
<dbReference type="CDD" id="cd02440">
    <property type="entry name" value="AdoMet_MTases"/>
    <property type="match status" value="1"/>
</dbReference>
<dbReference type="Gene3D" id="3.40.50.150">
    <property type="entry name" value="Vaccinia Virus protein VP39"/>
    <property type="match status" value="1"/>
</dbReference>
<dbReference type="HAMAP" id="MF_01057">
    <property type="entry name" value="tRNA_methyltr_TrmB"/>
    <property type="match status" value="1"/>
</dbReference>
<dbReference type="InterPro" id="IPR029063">
    <property type="entry name" value="SAM-dependent_MTases_sf"/>
</dbReference>
<dbReference type="InterPro" id="IPR003358">
    <property type="entry name" value="tRNA_(Gua-N-7)_MeTrfase_Trmb"/>
</dbReference>
<dbReference type="InterPro" id="IPR055361">
    <property type="entry name" value="tRNA_methyltr_TrmB_bact"/>
</dbReference>
<dbReference type="NCBIfam" id="TIGR00091">
    <property type="entry name" value="tRNA (guanosine(46)-N7)-methyltransferase TrmB"/>
    <property type="match status" value="1"/>
</dbReference>
<dbReference type="PANTHER" id="PTHR23417">
    <property type="entry name" value="3-DEOXY-D-MANNO-OCTULOSONIC-ACID TRANSFERASE/TRNA GUANINE-N 7 - -METHYLTRANSFERASE"/>
    <property type="match status" value="1"/>
</dbReference>
<dbReference type="PANTHER" id="PTHR23417:SF14">
    <property type="entry name" value="PENTACOTRIPEPTIDE-REPEAT REGION OF PRORP DOMAIN-CONTAINING PROTEIN"/>
    <property type="match status" value="1"/>
</dbReference>
<dbReference type="Pfam" id="PF02390">
    <property type="entry name" value="Methyltransf_4"/>
    <property type="match status" value="1"/>
</dbReference>
<dbReference type="SUPFAM" id="SSF53335">
    <property type="entry name" value="S-adenosyl-L-methionine-dependent methyltransferases"/>
    <property type="match status" value="1"/>
</dbReference>
<dbReference type="PROSITE" id="PS51625">
    <property type="entry name" value="SAM_MT_TRMB"/>
    <property type="match status" value="1"/>
</dbReference>
<organism>
    <name type="scientific">Mycobacterium leprae (strain TN)</name>
    <dbReference type="NCBI Taxonomy" id="272631"/>
    <lineage>
        <taxon>Bacteria</taxon>
        <taxon>Bacillati</taxon>
        <taxon>Actinomycetota</taxon>
        <taxon>Actinomycetes</taxon>
        <taxon>Mycobacteriales</taxon>
        <taxon>Mycobacteriaceae</taxon>
        <taxon>Mycobacterium</taxon>
    </lineage>
</organism>
<keyword id="KW-0489">Methyltransferase</keyword>
<keyword id="KW-1185">Reference proteome</keyword>
<keyword id="KW-0949">S-adenosyl-L-methionine</keyword>
<keyword id="KW-0808">Transferase</keyword>
<keyword id="KW-0819">tRNA processing</keyword>
<gene>
    <name evidence="2" type="primary">trmB</name>
    <name type="ordered locus">ML2622</name>
    <name type="ORF">MLCL622.20c</name>
</gene>
<protein>
    <recommendedName>
        <fullName evidence="2">tRNA (guanine-N(7)-)-methyltransferase</fullName>
        <ecNumber evidence="2">2.1.1.33</ecNumber>
    </recommendedName>
    <alternativeName>
        <fullName evidence="2">tRNA (guanine(46)-N(7))-methyltransferase</fullName>
    </alternativeName>
    <alternativeName>
        <fullName evidence="2">tRNA(m7G46)-methyltransferase</fullName>
    </alternativeName>
</protein>
<comment type="function">
    <text evidence="2">Catalyzes the formation of N(7)-methylguanine at position 46 (m7G46) in tRNA.</text>
</comment>
<comment type="catalytic activity">
    <reaction evidence="2">
        <text>guanosine(46) in tRNA + S-adenosyl-L-methionine = N(7)-methylguanosine(46) in tRNA + S-adenosyl-L-homocysteine</text>
        <dbReference type="Rhea" id="RHEA:42708"/>
        <dbReference type="Rhea" id="RHEA-COMP:10188"/>
        <dbReference type="Rhea" id="RHEA-COMP:10189"/>
        <dbReference type="ChEBI" id="CHEBI:57856"/>
        <dbReference type="ChEBI" id="CHEBI:59789"/>
        <dbReference type="ChEBI" id="CHEBI:74269"/>
        <dbReference type="ChEBI" id="CHEBI:74480"/>
        <dbReference type="EC" id="2.1.1.33"/>
    </reaction>
</comment>
<comment type="pathway">
    <text evidence="2">tRNA modification; N(7)-methylguanine-tRNA biosynthesis.</text>
</comment>
<comment type="similarity">
    <text evidence="2">Belongs to the class I-like SAM-binding methyltransferase superfamily. TrmB family.</text>
</comment>
<comment type="sequence caution" evidence="3">
    <conflict type="erroneous initiation">
        <sequence resource="EMBL-CDS" id="CAB08804"/>
    </conflict>
</comment>
<proteinExistence type="inferred from homology"/>
<name>TRMB_MYCLE</name>
<evidence type="ECO:0000250" key="1"/>
<evidence type="ECO:0000255" key="2">
    <source>
        <dbReference type="HAMAP-Rule" id="MF_01057"/>
    </source>
</evidence>
<evidence type="ECO:0000305" key="3"/>
<accession>Q9CCZ9</accession>
<accession>O06083</accession>